<organism>
    <name type="scientific">Rattus norvegicus</name>
    <name type="common">Rat</name>
    <dbReference type="NCBI Taxonomy" id="10116"/>
    <lineage>
        <taxon>Eukaryota</taxon>
        <taxon>Metazoa</taxon>
        <taxon>Chordata</taxon>
        <taxon>Craniata</taxon>
        <taxon>Vertebrata</taxon>
        <taxon>Euteleostomi</taxon>
        <taxon>Mammalia</taxon>
        <taxon>Eutheria</taxon>
        <taxon>Euarchontoglires</taxon>
        <taxon>Glires</taxon>
        <taxon>Rodentia</taxon>
        <taxon>Myomorpha</taxon>
        <taxon>Muroidea</taxon>
        <taxon>Muridae</taxon>
        <taxon>Murinae</taxon>
        <taxon>Rattus</taxon>
    </lineage>
</organism>
<evidence type="ECO:0000250" key="1">
    <source>
        <dbReference type="UniProtKB" id="O95461"/>
    </source>
</evidence>
<evidence type="ECO:0000250" key="2">
    <source>
        <dbReference type="UniProtKB" id="Q5XPT3"/>
    </source>
</evidence>
<evidence type="ECO:0000250" key="3">
    <source>
        <dbReference type="UniProtKB" id="Q8N3Y3"/>
    </source>
</evidence>
<evidence type="ECO:0000255" key="4"/>
<evidence type="ECO:0000305" key="5"/>
<evidence type="ECO:0000312" key="6">
    <source>
        <dbReference type="RGD" id="735214"/>
    </source>
</evidence>
<gene>
    <name evidence="6" type="primary">Large2</name>
    <name type="synonym">Gyltl1b</name>
</gene>
<dbReference type="EC" id="2.4.-.-" evidence="2"/>
<dbReference type="EC" id="2.4.2.-" evidence="2"/>
<dbReference type="EC" id="2.4.1.-" evidence="2"/>
<dbReference type="EMBL" id="BC061762">
    <property type="protein sequence ID" value="AAH61762.1"/>
    <property type="molecule type" value="mRNA"/>
</dbReference>
<dbReference type="RefSeq" id="NP_954538.1">
    <property type="nucleotide sequence ID" value="NM_199107.2"/>
</dbReference>
<dbReference type="SMR" id="Q6P7A1"/>
<dbReference type="FunCoup" id="Q6P7A1">
    <property type="interactions" value="69"/>
</dbReference>
<dbReference type="STRING" id="10116.ENSRNOP00000041797"/>
<dbReference type="CAZy" id="GT49">
    <property type="family name" value="Glycosyltransferase Family 49"/>
</dbReference>
<dbReference type="CAZy" id="GT8">
    <property type="family name" value="Glycosyltransferase Family 8"/>
</dbReference>
<dbReference type="GlyCosmos" id="Q6P7A1">
    <property type="glycosylation" value="3 sites, No reported glycans"/>
</dbReference>
<dbReference type="GlyGen" id="Q6P7A1">
    <property type="glycosylation" value="3 sites"/>
</dbReference>
<dbReference type="PhosphoSitePlus" id="Q6P7A1"/>
<dbReference type="PaxDb" id="10116-ENSRNOP00000041797"/>
<dbReference type="GeneID" id="311202"/>
<dbReference type="KEGG" id="rno:311202"/>
<dbReference type="UCSC" id="RGD:735214">
    <property type="organism name" value="rat"/>
</dbReference>
<dbReference type="AGR" id="RGD:735214"/>
<dbReference type="CTD" id="120071"/>
<dbReference type="RGD" id="735214">
    <property type="gene designation" value="Large2"/>
</dbReference>
<dbReference type="VEuPathDB" id="HostDB:ENSRNOG00000006353"/>
<dbReference type="eggNOG" id="KOG3765">
    <property type="taxonomic scope" value="Eukaryota"/>
</dbReference>
<dbReference type="HOGENOM" id="CLU_019238_3_2_1"/>
<dbReference type="InParanoid" id="Q6P7A1"/>
<dbReference type="OrthoDB" id="411524at2759"/>
<dbReference type="PhylomeDB" id="Q6P7A1"/>
<dbReference type="TreeFam" id="TF319168"/>
<dbReference type="Reactome" id="R-RNO-5173105">
    <property type="pathway name" value="O-linked glycosylation"/>
</dbReference>
<dbReference type="UniPathway" id="UPA00378"/>
<dbReference type="PRO" id="PR:Q6P7A1"/>
<dbReference type="Proteomes" id="UP000002494">
    <property type="component" value="Chromosome 3"/>
</dbReference>
<dbReference type="Bgee" id="ENSRNOG00000006353">
    <property type="expression patterns" value="Expressed in pancreas and 15 other cell types or tissues"/>
</dbReference>
<dbReference type="GO" id="GO:0005794">
    <property type="term" value="C:Golgi apparatus"/>
    <property type="evidence" value="ECO:0000318"/>
    <property type="project" value="GO_Central"/>
</dbReference>
<dbReference type="GO" id="GO:0000139">
    <property type="term" value="C:Golgi membrane"/>
    <property type="evidence" value="ECO:0007669"/>
    <property type="project" value="UniProtKB-SubCell"/>
</dbReference>
<dbReference type="GO" id="GO:0043231">
    <property type="term" value="C:intracellular membrane-bounded organelle"/>
    <property type="evidence" value="ECO:0000266"/>
    <property type="project" value="RGD"/>
</dbReference>
<dbReference type="GO" id="GO:0002162">
    <property type="term" value="F:dystroglycan binding"/>
    <property type="evidence" value="ECO:0000266"/>
    <property type="project" value="RGD"/>
</dbReference>
<dbReference type="GO" id="GO:0015020">
    <property type="term" value="F:glucuronosyltransferase activity"/>
    <property type="evidence" value="ECO:0000250"/>
    <property type="project" value="UniProtKB"/>
</dbReference>
<dbReference type="GO" id="GO:0016757">
    <property type="term" value="F:glycosyltransferase activity"/>
    <property type="evidence" value="ECO:0000266"/>
    <property type="project" value="RGD"/>
</dbReference>
<dbReference type="GO" id="GO:0046872">
    <property type="term" value="F:metal ion binding"/>
    <property type="evidence" value="ECO:0007669"/>
    <property type="project" value="UniProtKB-KW"/>
</dbReference>
<dbReference type="GO" id="GO:0042285">
    <property type="term" value="F:xylosyltransferase activity"/>
    <property type="evidence" value="ECO:0000250"/>
    <property type="project" value="UniProtKB"/>
</dbReference>
<dbReference type="GO" id="GO:0035269">
    <property type="term" value="P:protein O-linked mannosylation"/>
    <property type="evidence" value="ECO:0000250"/>
    <property type="project" value="UniProtKB"/>
</dbReference>
<dbReference type="CDD" id="cd06431">
    <property type="entry name" value="GT8_LARGE_C"/>
    <property type="match status" value="1"/>
</dbReference>
<dbReference type="FunFam" id="3.90.550.10:FF:000229">
    <property type="entry name" value="Glycosyltransferase-like protein LARGE"/>
    <property type="match status" value="1"/>
</dbReference>
<dbReference type="FunFam" id="3.90.550.10:FF:000016">
    <property type="entry name" value="LARGE xylosyl- and glucuronyltransferase 2"/>
    <property type="match status" value="1"/>
</dbReference>
<dbReference type="Gene3D" id="3.90.550.10">
    <property type="entry name" value="Spore Coat Polysaccharide Biosynthesis Protein SpsA, Chain A"/>
    <property type="match status" value="1"/>
</dbReference>
<dbReference type="InterPro" id="IPR002495">
    <property type="entry name" value="Glyco_trans_8"/>
</dbReference>
<dbReference type="InterPro" id="IPR029044">
    <property type="entry name" value="Nucleotide-diphossugar_trans"/>
</dbReference>
<dbReference type="InterPro" id="IPR051292">
    <property type="entry name" value="Xyl/GlcA_transferase"/>
</dbReference>
<dbReference type="PANTHER" id="PTHR12270">
    <property type="entry name" value="GLYCOSYLTRANSFERASE-RELATED"/>
    <property type="match status" value="1"/>
</dbReference>
<dbReference type="PANTHER" id="PTHR12270:SF23">
    <property type="entry name" value="XYLOSYL- AND GLUCURONYLTRANSFERASE LARGE2"/>
    <property type="match status" value="1"/>
</dbReference>
<dbReference type="Pfam" id="PF13896">
    <property type="entry name" value="Glyco_transf_49"/>
    <property type="match status" value="2"/>
</dbReference>
<dbReference type="Pfam" id="PF01501">
    <property type="entry name" value="Glyco_transf_8"/>
    <property type="match status" value="1"/>
</dbReference>
<dbReference type="SUPFAM" id="SSF53448">
    <property type="entry name" value="Nucleotide-diphospho-sugar transferases"/>
    <property type="match status" value="1"/>
</dbReference>
<name>LARG2_RAT</name>
<accession>Q6P7A1</accession>
<keyword id="KW-0325">Glycoprotein</keyword>
<keyword id="KW-0328">Glycosyltransferase</keyword>
<keyword id="KW-0333">Golgi apparatus</keyword>
<keyword id="KW-0464">Manganese</keyword>
<keyword id="KW-0472">Membrane</keyword>
<keyword id="KW-0479">Metal-binding</keyword>
<keyword id="KW-0511">Multifunctional enzyme</keyword>
<keyword id="KW-1185">Reference proteome</keyword>
<keyword id="KW-0735">Signal-anchor</keyword>
<keyword id="KW-0808">Transferase</keyword>
<keyword id="KW-0812">Transmembrane</keyword>
<keyword id="KW-1133">Transmembrane helix</keyword>
<reference key="1">
    <citation type="journal article" date="2004" name="Genome Res.">
        <title>The status, quality, and expansion of the NIH full-length cDNA project: the Mammalian Gene Collection (MGC).</title>
        <authorList>
            <consortium name="The MGC Project Team"/>
        </authorList>
    </citation>
    <scope>NUCLEOTIDE SEQUENCE [LARGE SCALE MRNA]</scope>
    <source>
        <tissue>Prostate</tissue>
    </source>
</reference>
<sequence>MLPRGRPRALGAALLLLLLLVVGFFLFGRDPEYGLGTTATLDGDPYGSRNRSTSSLQLLLPPKCEMLHVAIVCAGYNSSREIITLMKSVLFYRKNPLHLHLITDAVARNILETLFRTWMVPAVVVSFYDAEELKPLVSWIPNKHYSGLYGLMKLVLPSVLPLSLARVIVLDTDVTFSSDIMELWALFGHFSDKQVVGLVENQSDWYLGNLWKNHRPWPALGRGFNTGVILLWLDRLQQIGWEQMWKLTAKRELLTLTATSLADQDIFNAVIKEHPELVHPLPCVWNVQLSDHTLAERCYLEAADLKVIHWNSPKKLRVKNKHAEFFRDLHLTFLGFDGKLLCRELFGCPNQFPPGVEQLQQALAQLDEEEPCFEFRQQQLTVHRVHITFLSHQPPPPRPHDVTLVAQLSMDRLQMLEALCRHWRGPMSLALYLTDAEAQQFLRFVETSPVLSARKDVAYHVVYRDGPLYPVNQLRNVALAQALTPYVFLSDIDFLPAYSLYDYLRASIEQLALGRRQRKAALVVPAFETLHYRFSFPNSKAELLTLLDAGSLHTFRYHEWPQGHASTDYTRWREAQAPYRVQWSADYEPYVVVPRDCPRYDPRFVGFGWNKVAHIIELDAQEYEFLVLPEAFSIHLPHAPSLDISRFRSSPTYRDCLQALKEEFHQDLSRRYGSAALKYLTALQQSRSRA</sequence>
<comment type="function">
    <text evidence="2 3">Bifunctional glycosyltransferase with both alpha-1,3-xylosyltransferase and beta-1,3-glucuronyltransferase activities involved in the maturation of alpha-dystroglycan (DAG1) by glycosylation leading to DAG1 binding to laminin G-like domain-containing extracellular proteins with high affinity and in a phosphorylated-O-mannosyl trisaccharide dependent manner. Elongates the glucuronyl-beta-1,4-xylose-beta disaccharide primer structure by adding repeating units [-3-Xylose-alpha-1,3-GlcA-beta-1-] to produce a heteropolysaccharide (By similarity). Supports the maturation of DAG1 more effectively than LARGE1 (By similarity). In addition, can modify both heparan sulfate (HS)- and chondroitin/dermatan sulfate (CS/DS)-proteoglycans (PGs), namely GPC4, with a glycosaminoglycan (GAG)-like polysaccharide composed of xylose and glucuronic acid to confer laminin binding (By similarity).</text>
</comment>
<comment type="catalytic activity">
    <reaction evidence="2">
        <text>3-O-[beta-D-GlcA-(1-&gt;3)-beta-D-Xyl-(1-&gt;4)-Rib-ol-P-Rib-ol-P-3-beta-D-GalNAc-(1-&gt;3)-beta-D-GlcNAc-(1-&gt;4)-(O-6-P-alpha-D-Man)]-Thr-[protein] + UDP-alpha-D-xylose = 3-O-[alpha-D-Xyl-(1-&gt;3)-beta-D-GlcA-(1-&gt;4)-beta-D-Xyl-(1-&gt;4)-Rib-ol-P-Rib-ol-P-3-beta-D-GalNAc-(1-&gt;3)-beta-D-GlcNAc-(1-&gt;4)-(O-6-P-alpha-D-Man)]-Thr-[protein] + UDP + H(+)</text>
        <dbReference type="Rhea" id="RHEA:57336"/>
        <dbReference type="Rhea" id="RHEA-COMP:17482"/>
        <dbReference type="Rhea" id="RHEA-COMP:17483"/>
        <dbReference type="ChEBI" id="CHEBI:15378"/>
        <dbReference type="ChEBI" id="CHEBI:57632"/>
        <dbReference type="ChEBI" id="CHEBI:58223"/>
        <dbReference type="ChEBI" id="CHEBI:177336"/>
        <dbReference type="ChEBI" id="CHEBI:177352"/>
    </reaction>
    <physiologicalReaction direction="left-to-right" evidence="2">
        <dbReference type="Rhea" id="RHEA:57337"/>
    </physiologicalReaction>
</comment>
<comment type="catalytic activity">
    <reaction evidence="2">
        <text>3-O-{(1-&gt;[3)-alpha-D-Xyl-(1-&gt;3)-beta-D-GlcA-(1-&gt;](n)-4)-beta-D-Xyl-(1-&gt;4)-Rib-ol-P-Rib-ol-P-3-beta-D-GalNAc-(1-&gt;3)-beta-D-GlcNAc-(1-&gt;4)-O-6-P-alpha-D-Man}-L-Thr-[protein] + UDP-alpha-D-glucuronate = 3-O-{beta-D-GlcA-(1-&gt;[3)-alpha-D-Xyl-(1-&gt;3)-beta-D-GlcA-(1-&gt;](n)-4)-beta-D-Xyl-(1-&gt;4)-Rib-ol-P-Rib-ol-P-3-beta-D-GalNAc-(1-&gt;3)-beta-D-GlcNAc-(1-&gt;4)-O-6-P-alpha-D-Man}-L-Thr-[protein] + UDP + H(+)</text>
        <dbReference type="Rhea" id="RHEA:67924"/>
        <dbReference type="Rhea" id="RHEA-COMP:17484"/>
        <dbReference type="Rhea" id="RHEA-COMP:17486"/>
        <dbReference type="ChEBI" id="CHEBI:15378"/>
        <dbReference type="ChEBI" id="CHEBI:58052"/>
        <dbReference type="ChEBI" id="CHEBI:58223"/>
        <dbReference type="ChEBI" id="CHEBI:177354"/>
        <dbReference type="ChEBI" id="CHEBI:177355"/>
    </reaction>
    <physiologicalReaction direction="left-to-right" evidence="2">
        <dbReference type="Rhea" id="RHEA:67925"/>
    </physiologicalReaction>
</comment>
<comment type="catalytic activity">
    <reaction evidence="2">
        <text>3-O-{beta-D-GlcA-(1-&gt;[3)-alpha-D-Xyl-(1-&gt;3)-beta-D-GlcA-(1-&gt;](n)-4)-beta-D-Xyl-(1-&gt;4)-Rib-ol-P-Rib-ol-P-3-beta-D-GalNAc-(1-&gt;3)-beta-D-GlcNAc-(1-&gt;4)-O-6-P-alpha-D-Man}-L-Thr-[protein] + UDP-alpha-D-xylose = 3-O-{(1-&gt;[3)-alpha-D-Xyl-(1-&gt;3)-beta-D-GlcA-(1-&gt;](n+1)-4)-beta-D-Xyl-(1-&gt;4)-Rib-ol-P-Rib-ol-P-3-beta-D-GalNAc-(1-&gt;3)-beta-D-GlcNAc-(1-&gt;4)-O-6-P-alpha-D-Man}-L-Thr-[protein] + UDP + H(+)</text>
        <dbReference type="Rhea" id="RHEA:68368"/>
        <dbReference type="Rhea" id="RHEA-COMP:17485"/>
        <dbReference type="Rhea" id="RHEA-COMP:17486"/>
        <dbReference type="ChEBI" id="CHEBI:15378"/>
        <dbReference type="ChEBI" id="CHEBI:57632"/>
        <dbReference type="ChEBI" id="CHEBI:58223"/>
        <dbReference type="ChEBI" id="CHEBI:177354"/>
        <dbReference type="ChEBI" id="CHEBI:177355"/>
    </reaction>
    <physiologicalReaction direction="left-to-right" evidence="2">
        <dbReference type="Rhea" id="RHEA:68369"/>
    </physiologicalReaction>
</comment>
<comment type="cofactor">
    <cofactor evidence="2">
        <name>Mn(2+)</name>
        <dbReference type="ChEBI" id="CHEBI:29035"/>
    </cofactor>
    <text evidence="2">Binds 2 Mn(2+) ions per subunit. The xylosyltransferase part binds one Mn(2+) and the beta-1,3-glucuronyltransferase part binds one Mn(2+).</text>
</comment>
<comment type="pathway">
    <text evidence="2">Protein modification; protein glycosylation.</text>
</comment>
<comment type="subunit">
    <text evidence="3">Interacts with B4GAT1.</text>
</comment>
<comment type="subcellular location">
    <subcellularLocation>
        <location evidence="2">Golgi apparatus membrane</location>
        <topology evidence="2">Single-pass type II membrane protein</topology>
    </subcellularLocation>
</comment>
<comment type="similarity">
    <text evidence="5">In the C-terminal section; belongs to the glycosyltransferase 49 family.</text>
</comment>
<comment type="similarity">
    <text evidence="5">In the N-terminal section; belongs to the glycosyltransferase 8 family.</text>
</comment>
<feature type="chain" id="PRO_0000226813" description="Xylosyl- and glucuronyltransferase LARGE2">
    <location>
        <begin position="1"/>
        <end position="690"/>
    </location>
</feature>
<feature type="topological domain" description="Cytoplasmic" evidence="4">
    <location>
        <begin position="1"/>
        <end position="7"/>
    </location>
</feature>
<feature type="transmembrane region" description="Helical; Signal-anchor for type II membrane protein" evidence="4">
    <location>
        <begin position="8"/>
        <end position="28"/>
    </location>
</feature>
<feature type="topological domain" description="Lumenal" evidence="4">
    <location>
        <begin position="29"/>
        <end position="690"/>
    </location>
</feature>
<feature type="region of interest" description="Xylosyltransferase activity" evidence="1">
    <location>
        <begin position="67"/>
        <end position="342"/>
    </location>
</feature>
<feature type="region of interest" description="Glucuronyltransferase activity" evidence="1">
    <location>
        <begin position="343"/>
        <end position="686"/>
    </location>
</feature>
<feature type="binding site" evidence="3">
    <location>
        <position position="171"/>
    </location>
    <ligand>
        <name>Mn(2+)</name>
        <dbReference type="ChEBI" id="CHEBI:29035"/>
        <label>1</label>
    </ligand>
</feature>
<feature type="binding site" evidence="3">
    <location>
        <position position="173"/>
    </location>
    <ligand>
        <name>Mn(2+)</name>
        <dbReference type="ChEBI" id="CHEBI:29035"/>
        <label>1</label>
    </ligand>
</feature>
<feature type="binding site" evidence="3">
    <location>
        <position position="491"/>
    </location>
    <ligand>
        <name>Mn(2+)</name>
        <dbReference type="ChEBI" id="CHEBI:29035"/>
        <label>2</label>
    </ligand>
</feature>
<feature type="binding site" evidence="3">
    <location>
        <position position="493"/>
    </location>
    <ligand>
        <name>Mn(2+)</name>
        <dbReference type="ChEBI" id="CHEBI:29035"/>
        <label>2</label>
    </ligand>
</feature>
<feature type="glycosylation site" description="N-linked (GlcNAc...) asparagine" evidence="4">
    <location>
        <position position="50"/>
    </location>
</feature>
<feature type="glycosylation site" description="N-linked (GlcNAc...) asparagine" evidence="4">
    <location>
        <position position="77"/>
    </location>
</feature>
<feature type="glycosylation site" description="N-linked (GlcNAc...) asparagine" evidence="4">
    <location>
        <position position="201"/>
    </location>
</feature>
<proteinExistence type="evidence at transcript level"/>
<protein>
    <recommendedName>
        <fullName evidence="5">Xylosyl- and glucuronyltransferase LARGE2</fullName>
        <ecNumber evidence="2">2.4.-.-</ecNumber>
    </recommendedName>
    <alternativeName>
        <fullName>Glycosyltransferase-like 1B</fullName>
    </alternativeName>
    <alternativeName>
        <fullName evidence="6">LARGE xylosyl- and glucuronyltransferase 2</fullName>
    </alternativeName>
    <domain>
        <recommendedName>
            <fullName evidence="5">Alpha-1,3-xylosyltransferase LARGE2</fullName>
            <ecNumber evidence="2">2.4.2.-</ecNumber>
        </recommendedName>
    </domain>
    <domain>
        <recommendedName>
            <fullName evidence="5">Beta-1,3-glucuronyltransferase LARGE2</fullName>
            <ecNumber evidence="2">2.4.1.-</ecNumber>
        </recommendedName>
    </domain>
</protein>